<comment type="function">
    <text evidence="1">Forms part of the ribosomal stalk which helps the ribosome interact with GTP-bound translation factors. Is thus essential for accurate translation.</text>
</comment>
<comment type="subunit">
    <text evidence="1">Homodimer. Part of the ribosomal stalk of the 50S ribosomal subunit. Forms a multimeric L10(L12)X complex, where L10 forms an elongated spine to which 2 to 4 L12 dimers bind in a sequential fashion. Binds GTP-bound translation factors.</text>
</comment>
<comment type="similarity">
    <text evidence="1">Belongs to the bacterial ribosomal protein bL12 family.</text>
</comment>
<accession>B5FQJ8</accession>
<proteinExistence type="inferred from homology"/>
<name>RL7_SALDC</name>
<evidence type="ECO:0000255" key="1">
    <source>
        <dbReference type="HAMAP-Rule" id="MF_00368"/>
    </source>
</evidence>
<evidence type="ECO:0000305" key="2"/>
<protein>
    <recommendedName>
        <fullName evidence="1">Large ribosomal subunit protein bL12</fullName>
    </recommendedName>
    <alternativeName>
        <fullName evidence="2">50S ribosomal protein L7/L12</fullName>
    </alternativeName>
</protein>
<keyword id="KW-0687">Ribonucleoprotein</keyword>
<keyword id="KW-0689">Ribosomal protein</keyword>
<dbReference type="EMBL" id="CP001144">
    <property type="protein sequence ID" value="ACH76890.1"/>
    <property type="molecule type" value="Genomic_DNA"/>
</dbReference>
<dbReference type="RefSeq" id="WP_000028882.1">
    <property type="nucleotide sequence ID" value="NC_011205.1"/>
</dbReference>
<dbReference type="SMR" id="B5FQJ8"/>
<dbReference type="GeneID" id="89551069"/>
<dbReference type="KEGG" id="sed:SeD_A4558"/>
<dbReference type="HOGENOM" id="CLU_086499_3_2_6"/>
<dbReference type="Proteomes" id="UP000008322">
    <property type="component" value="Chromosome"/>
</dbReference>
<dbReference type="GO" id="GO:0022625">
    <property type="term" value="C:cytosolic large ribosomal subunit"/>
    <property type="evidence" value="ECO:0007669"/>
    <property type="project" value="TreeGrafter"/>
</dbReference>
<dbReference type="GO" id="GO:0003729">
    <property type="term" value="F:mRNA binding"/>
    <property type="evidence" value="ECO:0007669"/>
    <property type="project" value="TreeGrafter"/>
</dbReference>
<dbReference type="GO" id="GO:0003735">
    <property type="term" value="F:structural constituent of ribosome"/>
    <property type="evidence" value="ECO:0007669"/>
    <property type="project" value="InterPro"/>
</dbReference>
<dbReference type="GO" id="GO:0006412">
    <property type="term" value="P:translation"/>
    <property type="evidence" value="ECO:0007669"/>
    <property type="project" value="UniProtKB-UniRule"/>
</dbReference>
<dbReference type="CDD" id="cd00387">
    <property type="entry name" value="Ribosomal_L7_L12"/>
    <property type="match status" value="1"/>
</dbReference>
<dbReference type="FunFam" id="1.20.5.710:FF:000001">
    <property type="entry name" value="50S ribosomal protein L7/L12"/>
    <property type="match status" value="1"/>
</dbReference>
<dbReference type="FunFam" id="3.30.1390.10:FF:000001">
    <property type="entry name" value="50S ribosomal protein L7/L12"/>
    <property type="match status" value="1"/>
</dbReference>
<dbReference type="Gene3D" id="3.30.1390.10">
    <property type="match status" value="1"/>
</dbReference>
<dbReference type="Gene3D" id="1.20.5.710">
    <property type="entry name" value="Single helix bin"/>
    <property type="match status" value="1"/>
</dbReference>
<dbReference type="HAMAP" id="MF_00368">
    <property type="entry name" value="Ribosomal_bL12"/>
    <property type="match status" value="1"/>
</dbReference>
<dbReference type="InterPro" id="IPR000206">
    <property type="entry name" value="Ribosomal_bL12"/>
</dbReference>
<dbReference type="InterPro" id="IPR013823">
    <property type="entry name" value="Ribosomal_bL12_C"/>
</dbReference>
<dbReference type="InterPro" id="IPR014719">
    <property type="entry name" value="Ribosomal_bL12_C/ClpS-like"/>
</dbReference>
<dbReference type="InterPro" id="IPR008932">
    <property type="entry name" value="Ribosomal_bL12_oligo"/>
</dbReference>
<dbReference type="InterPro" id="IPR036235">
    <property type="entry name" value="Ribosomal_bL12_oligo_N_sf"/>
</dbReference>
<dbReference type="NCBIfam" id="TIGR00855">
    <property type="entry name" value="L12"/>
    <property type="match status" value="1"/>
</dbReference>
<dbReference type="PANTHER" id="PTHR45987">
    <property type="entry name" value="39S RIBOSOMAL PROTEIN L12"/>
    <property type="match status" value="1"/>
</dbReference>
<dbReference type="PANTHER" id="PTHR45987:SF4">
    <property type="entry name" value="LARGE RIBOSOMAL SUBUNIT PROTEIN BL12M"/>
    <property type="match status" value="1"/>
</dbReference>
<dbReference type="Pfam" id="PF00542">
    <property type="entry name" value="Ribosomal_L12"/>
    <property type="match status" value="1"/>
</dbReference>
<dbReference type="Pfam" id="PF16320">
    <property type="entry name" value="Ribosomal_L12_N"/>
    <property type="match status" value="1"/>
</dbReference>
<dbReference type="SUPFAM" id="SSF54736">
    <property type="entry name" value="ClpS-like"/>
    <property type="match status" value="1"/>
</dbReference>
<dbReference type="SUPFAM" id="SSF48300">
    <property type="entry name" value="Ribosomal protein L7/12, oligomerisation (N-terminal) domain"/>
    <property type="match status" value="1"/>
</dbReference>
<feature type="chain" id="PRO_1000121482" description="Large ribosomal subunit protein bL12">
    <location>
        <begin position="1"/>
        <end position="121"/>
    </location>
</feature>
<reference key="1">
    <citation type="journal article" date="2011" name="J. Bacteriol.">
        <title>Comparative genomics of 28 Salmonella enterica isolates: evidence for CRISPR-mediated adaptive sublineage evolution.</title>
        <authorList>
            <person name="Fricke W.F."/>
            <person name="Mammel M.K."/>
            <person name="McDermott P.F."/>
            <person name="Tartera C."/>
            <person name="White D.G."/>
            <person name="Leclerc J.E."/>
            <person name="Ravel J."/>
            <person name="Cebula T.A."/>
        </authorList>
    </citation>
    <scope>NUCLEOTIDE SEQUENCE [LARGE SCALE GENOMIC DNA]</scope>
    <source>
        <strain>CT_02021853</strain>
    </source>
</reference>
<organism>
    <name type="scientific">Salmonella dublin (strain CT_02021853)</name>
    <dbReference type="NCBI Taxonomy" id="439851"/>
    <lineage>
        <taxon>Bacteria</taxon>
        <taxon>Pseudomonadati</taxon>
        <taxon>Pseudomonadota</taxon>
        <taxon>Gammaproteobacteria</taxon>
        <taxon>Enterobacterales</taxon>
        <taxon>Enterobacteriaceae</taxon>
        <taxon>Salmonella</taxon>
    </lineage>
</organism>
<gene>
    <name evidence="1" type="primary">rplL</name>
    <name type="ordered locus">SeD_A4558</name>
</gene>
<sequence length="121" mass="12299">MSITKDQIIEAVSAMSVMDVVELISAMEEKFGVSAAAAVAVAAGPAEAAEEKTEFDVILKAAGANKVAVIKAVRGATGLGLKEAKDLVESAPAALKEGVSKDDAEALKKSLEEAGAEVEVK</sequence>